<evidence type="ECO:0000250" key="1"/>
<evidence type="ECO:0000255" key="2"/>
<evidence type="ECO:0000305" key="3"/>
<proteinExistence type="inferred from homology"/>
<dbReference type="EMBL" id="GL377573">
    <property type="protein sequence ID" value="EFJ31626.1"/>
    <property type="molecule type" value="Genomic_DNA"/>
</dbReference>
<dbReference type="SMR" id="D8R814"/>
<dbReference type="STRING" id="88036.D8R814"/>
<dbReference type="EnsemblPlants" id="EFJ31626">
    <property type="protein sequence ID" value="EFJ31626"/>
    <property type="gene ID" value="SELMODRAFT_408357"/>
</dbReference>
<dbReference type="Gramene" id="EFJ31626">
    <property type="protein sequence ID" value="EFJ31626"/>
    <property type="gene ID" value="SELMODRAFT_408357"/>
</dbReference>
<dbReference type="KEGG" id="smo:SELMODRAFT_408357"/>
<dbReference type="eggNOG" id="ENOG502SF1Y">
    <property type="taxonomic scope" value="Eukaryota"/>
</dbReference>
<dbReference type="HOGENOM" id="CLU_1477516_0_0_1"/>
<dbReference type="InParanoid" id="D8R814"/>
<dbReference type="OMA" id="NINHMSG"/>
<dbReference type="OrthoDB" id="1924823at2759"/>
<dbReference type="Proteomes" id="UP000001514">
    <property type="component" value="Unassembled WGS sequence"/>
</dbReference>
<dbReference type="GO" id="GO:0005886">
    <property type="term" value="C:plasma membrane"/>
    <property type="evidence" value="ECO:0007669"/>
    <property type="project" value="UniProtKB-SubCell"/>
</dbReference>
<dbReference type="InterPro" id="IPR006702">
    <property type="entry name" value="CASP_dom"/>
</dbReference>
<dbReference type="PANTHER" id="PTHR33573:SF50">
    <property type="entry name" value="CASP-LIKE PROTEIN 4A3"/>
    <property type="match status" value="1"/>
</dbReference>
<dbReference type="PANTHER" id="PTHR33573">
    <property type="entry name" value="CASP-LIKE PROTEIN 4A4"/>
    <property type="match status" value="1"/>
</dbReference>
<dbReference type="Pfam" id="PF04535">
    <property type="entry name" value="CASP_dom"/>
    <property type="match status" value="1"/>
</dbReference>
<protein>
    <recommendedName>
        <fullName>CASP-like protein UU2</fullName>
        <shortName>SmCASPLUU2</shortName>
    </recommendedName>
</protein>
<gene>
    <name type="ORF">SELMODRAFT_408357</name>
</gene>
<comment type="subunit">
    <text evidence="1">Homodimer and heterodimers.</text>
</comment>
<comment type="subcellular location">
    <subcellularLocation>
        <location evidence="1">Cell membrane</location>
        <topology evidence="1">Multi-pass membrane protein</topology>
    </subcellularLocation>
</comment>
<comment type="similarity">
    <text evidence="3">Belongs to the Casparian strip membrane proteins (CASP) family.</text>
</comment>
<reference key="1">
    <citation type="journal article" date="2011" name="Science">
        <title>The Selaginella genome identifies genetic changes associated with the evolution of vascular plants.</title>
        <authorList>
            <person name="Banks J.A."/>
            <person name="Nishiyama T."/>
            <person name="Hasebe M."/>
            <person name="Bowman J.L."/>
            <person name="Gribskov M."/>
            <person name="dePamphilis C."/>
            <person name="Albert V.A."/>
            <person name="Aono N."/>
            <person name="Aoyama T."/>
            <person name="Ambrose B.A."/>
            <person name="Ashton N.W."/>
            <person name="Axtell M.J."/>
            <person name="Barker E."/>
            <person name="Barker M.S."/>
            <person name="Bennetzen J.L."/>
            <person name="Bonawitz N.D."/>
            <person name="Chapple C."/>
            <person name="Cheng C."/>
            <person name="Correa L.G."/>
            <person name="Dacre M."/>
            <person name="DeBarry J."/>
            <person name="Dreyer I."/>
            <person name="Elias M."/>
            <person name="Engstrom E.M."/>
            <person name="Estelle M."/>
            <person name="Feng L."/>
            <person name="Finet C."/>
            <person name="Floyd S.K."/>
            <person name="Frommer W.B."/>
            <person name="Fujita T."/>
            <person name="Gramzow L."/>
            <person name="Gutensohn M."/>
            <person name="Harholt J."/>
            <person name="Hattori M."/>
            <person name="Heyl A."/>
            <person name="Hirai T."/>
            <person name="Hiwatashi Y."/>
            <person name="Ishikawa M."/>
            <person name="Iwata M."/>
            <person name="Karol K.G."/>
            <person name="Koehler B."/>
            <person name="Kolukisaoglu U."/>
            <person name="Kubo M."/>
            <person name="Kurata T."/>
            <person name="Lalonde S."/>
            <person name="Li K."/>
            <person name="Li Y."/>
            <person name="Litt A."/>
            <person name="Lyons E."/>
            <person name="Manning G."/>
            <person name="Maruyama T."/>
            <person name="Michael T.P."/>
            <person name="Mikami K."/>
            <person name="Miyazaki S."/>
            <person name="Morinaga S."/>
            <person name="Murata T."/>
            <person name="Mueller-Roeber B."/>
            <person name="Nelson D.R."/>
            <person name="Obara M."/>
            <person name="Oguri Y."/>
            <person name="Olmstead R.G."/>
            <person name="Onodera N."/>
            <person name="Petersen B.L."/>
            <person name="Pils B."/>
            <person name="Prigge M."/>
            <person name="Rensing S.A."/>
            <person name="Riano-Pachon D.M."/>
            <person name="Roberts A.W."/>
            <person name="Sato Y."/>
            <person name="Scheller H.V."/>
            <person name="Schulz B."/>
            <person name="Schulz C."/>
            <person name="Shakirov E.V."/>
            <person name="Shibagaki N."/>
            <person name="Shinohara N."/>
            <person name="Shippen D.E."/>
            <person name="Soerensen I."/>
            <person name="Sotooka R."/>
            <person name="Sugimoto N."/>
            <person name="Sugita M."/>
            <person name="Sumikawa N."/>
            <person name="Tanurdzic M."/>
            <person name="Theissen G."/>
            <person name="Ulvskov P."/>
            <person name="Wakazuki S."/>
            <person name="Weng J.K."/>
            <person name="Willats W.W."/>
            <person name="Wipf D."/>
            <person name="Wolf P.G."/>
            <person name="Yang L."/>
            <person name="Zimmer A.D."/>
            <person name="Zhu Q."/>
            <person name="Mitros T."/>
            <person name="Hellsten U."/>
            <person name="Loque D."/>
            <person name="Otillar R."/>
            <person name="Salamov A."/>
            <person name="Schmutz J."/>
            <person name="Shapiro H."/>
            <person name="Lindquist E."/>
            <person name="Lucas S."/>
            <person name="Rokhsar D."/>
            <person name="Grigoriev I.V."/>
        </authorList>
    </citation>
    <scope>NUCLEOTIDE SEQUENCE [LARGE SCALE GENOMIC DNA]</scope>
</reference>
<reference key="2">
    <citation type="journal article" date="2014" name="Plant Physiol.">
        <title>Functional and evolutionary analysis of the CASPARIAN STRIP MEMBRANE DOMAIN PROTEIN family.</title>
        <authorList>
            <person name="Roppolo D."/>
            <person name="Boeckmann B."/>
            <person name="Pfister A."/>
            <person name="Boutet E."/>
            <person name="Rubio M.C."/>
            <person name="Denervaud-Tendon V."/>
            <person name="Vermeer J.E."/>
            <person name="Gheyselinck J."/>
            <person name="Xenarios I."/>
            <person name="Geldner N."/>
        </authorList>
    </citation>
    <scope>GENE FAMILY</scope>
    <scope>NOMENCLATURE</scope>
</reference>
<sequence>MEESQQQSSKFDAPPSPYVPSRVYLAQIYWKKPAIVVLRVLQFIFSLIAFSVMADVLHDVQGSIKSLSYTVAIGVLACAYALAQLSFSLWCVIRGATSSAGVTPLYQYATFICDQMSTYFLISAASATATLIDVSGVCGSNGSGTNLCSRSTASVTFAFLAFLAFSASSVLTGYYLVKCILKA</sequence>
<accession>D8R814</accession>
<feature type="chain" id="PRO_0000418675" description="CASP-like protein UU2">
    <location>
        <begin position="1"/>
        <end position="183"/>
    </location>
</feature>
<feature type="topological domain" description="Cytoplasmic" evidence="2">
    <location>
        <begin position="1"/>
        <end position="33"/>
    </location>
</feature>
<feature type="transmembrane region" description="Helical" evidence="2">
    <location>
        <begin position="34"/>
        <end position="54"/>
    </location>
</feature>
<feature type="topological domain" description="Extracellular" evidence="2">
    <location>
        <begin position="55"/>
        <end position="72"/>
    </location>
</feature>
<feature type="transmembrane region" description="Helical" evidence="2">
    <location>
        <begin position="73"/>
        <end position="93"/>
    </location>
</feature>
<feature type="topological domain" description="Cytoplasmic" evidence="2">
    <location>
        <begin position="94"/>
        <end position="118"/>
    </location>
</feature>
<feature type="transmembrane region" description="Helical" evidence="2">
    <location>
        <begin position="119"/>
        <end position="139"/>
    </location>
</feature>
<feature type="topological domain" description="Extracellular" evidence="2">
    <location>
        <begin position="140"/>
        <end position="156"/>
    </location>
</feature>
<feature type="transmembrane region" description="Helical" evidence="2">
    <location>
        <begin position="157"/>
        <end position="177"/>
    </location>
</feature>
<feature type="topological domain" description="Cytoplasmic" evidence="2">
    <location>
        <begin position="178"/>
        <end position="183"/>
    </location>
</feature>
<feature type="glycosylation site" description="N-linked (GlcNAc...) asparagine" evidence="2">
    <location>
        <position position="141"/>
    </location>
</feature>
<organism>
    <name type="scientific">Selaginella moellendorffii</name>
    <name type="common">Spikemoss</name>
    <dbReference type="NCBI Taxonomy" id="88036"/>
    <lineage>
        <taxon>Eukaryota</taxon>
        <taxon>Viridiplantae</taxon>
        <taxon>Streptophyta</taxon>
        <taxon>Embryophyta</taxon>
        <taxon>Tracheophyta</taxon>
        <taxon>Lycopodiopsida</taxon>
        <taxon>Selaginellales</taxon>
        <taxon>Selaginellaceae</taxon>
        <taxon>Selaginella</taxon>
    </lineage>
</organism>
<keyword id="KW-1003">Cell membrane</keyword>
<keyword id="KW-0325">Glycoprotein</keyword>
<keyword id="KW-0472">Membrane</keyword>
<keyword id="KW-1185">Reference proteome</keyword>
<keyword id="KW-0812">Transmembrane</keyword>
<keyword id="KW-1133">Transmembrane helix</keyword>
<name>CSPLA_SELML</name>